<feature type="chain" id="PRO_0000370708" description="Trehalose-phosphate phosphatase">
    <location>
        <begin position="1"/>
        <end position="390"/>
    </location>
</feature>
<feature type="active site" description="Nucleophile" evidence="1">
    <location>
        <position position="150"/>
    </location>
</feature>
<feature type="binding site" evidence="1">
    <location>
        <begin position="150"/>
        <end position="152"/>
    </location>
    <ligand>
        <name>substrate</name>
    </ligand>
</feature>
<feature type="binding site" evidence="1">
    <location>
        <position position="150"/>
    </location>
    <ligand>
        <name>Mg(2+)</name>
        <dbReference type="ChEBI" id="CHEBI:18420"/>
    </ligand>
</feature>
<feature type="binding site" evidence="1">
    <location>
        <position position="152"/>
    </location>
    <ligand>
        <name>Mg(2+)</name>
        <dbReference type="ChEBI" id="CHEBI:18420"/>
    </ligand>
</feature>
<feature type="binding site" evidence="1">
    <location>
        <position position="333"/>
    </location>
    <ligand>
        <name>Mg(2+)</name>
        <dbReference type="ChEBI" id="CHEBI:18420"/>
    </ligand>
</feature>
<gene>
    <name type="primary">otsB</name>
    <name type="ordered locus">MUL_0921</name>
</gene>
<evidence type="ECO:0000250" key="1"/>
<evidence type="ECO:0000305" key="2"/>
<name>OTSB_MYCUA</name>
<reference key="1">
    <citation type="journal article" date="2007" name="Genome Res.">
        <title>Reductive evolution and niche adaptation inferred from the genome of Mycobacterium ulcerans, the causative agent of Buruli ulcer.</title>
        <authorList>
            <person name="Stinear T.P."/>
            <person name="Seemann T."/>
            <person name="Pidot S."/>
            <person name="Frigui W."/>
            <person name="Reysset G."/>
            <person name="Garnier T."/>
            <person name="Meurice G."/>
            <person name="Simon D."/>
            <person name="Bouchier C."/>
            <person name="Ma L."/>
            <person name="Tichit M."/>
            <person name="Porter J.L."/>
            <person name="Ryan J."/>
            <person name="Johnson P.D.R."/>
            <person name="Davies J.K."/>
            <person name="Jenkin G.A."/>
            <person name="Small P.L.C."/>
            <person name="Jones L.M."/>
            <person name="Tekaia F."/>
            <person name="Laval F."/>
            <person name="Daffe M."/>
            <person name="Parkhill J."/>
            <person name="Cole S.T."/>
        </authorList>
    </citation>
    <scope>NUCLEOTIDE SEQUENCE [LARGE SCALE GENOMIC DNA]</scope>
    <source>
        <strain>Agy99</strain>
    </source>
</reference>
<protein>
    <recommendedName>
        <fullName>Trehalose-phosphate phosphatase</fullName>
        <shortName>TPP</shortName>
        <ecNumber>3.1.3.12</ecNumber>
    </recommendedName>
    <alternativeName>
        <fullName>Trehalose-6-phosphate phosphatase</fullName>
    </alternativeName>
</protein>
<comment type="function">
    <text evidence="1">Removes the phosphate from trehalose 6-phosphate to produce free trehalose.</text>
</comment>
<comment type="catalytic activity">
    <reaction>
        <text>alpha,alpha-trehalose 6-phosphate + H2O = alpha,alpha-trehalose + phosphate</text>
        <dbReference type="Rhea" id="RHEA:23420"/>
        <dbReference type="ChEBI" id="CHEBI:15377"/>
        <dbReference type="ChEBI" id="CHEBI:16551"/>
        <dbReference type="ChEBI" id="CHEBI:43474"/>
        <dbReference type="ChEBI" id="CHEBI:58429"/>
        <dbReference type="EC" id="3.1.3.12"/>
    </reaction>
</comment>
<comment type="cofactor">
    <cofactor evidence="1">
        <name>Mg(2+)</name>
        <dbReference type="ChEBI" id="CHEBI:18420"/>
    </cofactor>
</comment>
<comment type="pathway">
    <text>Glycan biosynthesis; trehalose biosynthesis.</text>
</comment>
<comment type="similarity">
    <text evidence="2">Belongs to the trehalose phosphatase family.</text>
</comment>
<accession>A0PMI0</accession>
<organism>
    <name type="scientific">Mycobacterium ulcerans (strain Agy99)</name>
    <dbReference type="NCBI Taxonomy" id="362242"/>
    <lineage>
        <taxon>Bacteria</taxon>
        <taxon>Bacillati</taxon>
        <taxon>Actinomycetota</taxon>
        <taxon>Actinomycetes</taxon>
        <taxon>Mycobacteriales</taxon>
        <taxon>Mycobacteriaceae</taxon>
        <taxon>Mycobacterium</taxon>
        <taxon>Mycobacterium ulcerans group</taxon>
    </lineage>
</organism>
<sequence length="390" mass="41040">MSVTIDPRRHDAVLFDTALNSTQALVRQLQQARVGTATFASGGGGHDAAIQALIESADRVGARPGRCVVITADAASVAAARDSGFALVIGVDQAGHRDALPDHGADTVLADLDEVRVRAGDRHMSELPDALQALGRPDGLTVPRPAVFFDFDGTLSEIVDDPDAATPTAGAVAALQQLAAQCPVAILSGRDLADVSQRVGLPGIWYAGSHGFELTAPDGTHHQNEAAAAAIPVLEQAAAQLRDRLGSIPGVMVEHKRFGVATHYRNAARNRVGKIAAVVRAAGQRDGLRVTTGREVIELHPDIDWDKGKTLRWVIDHLPDQRAAPLVPIYLGDDITDEDAFDAVGPNGVAIMVRHNEDGDRATAALFALESPARVAEFTGRLASQLSTLG</sequence>
<keyword id="KW-0378">Hydrolase</keyword>
<keyword id="KW-0460">Magnesium</keyword>
<keyword id="KW-0479">Metal-binding</keyword>
<proteinExistence type="inferred from homology"/>
<dbReference type="EC" id="3.1.3.12"/>
<dbReference type="EMBL" id="CP000325">
    <property type="protein sequence ID" value="ABL03549.1"/>
    <property type="molecule type" value="Genomic_DNA"/>
</dbReference>
<dbReference type="RefSeq" id="WP_011739172.1">
    <property type="nucleotide sequence ID" value="NC_008611.1"/>
</dbReference>
<dbReference type="SMR" id="A0PMI0"/>
<dbReference type="KEGG" id="mul:MUL_0921"/>
<dbReference type="eggNOG" id="COG0561">
    <property type="taxonomic scope" value="Bacteria"/>
</dbReference>
<dbReference type="eggNOG" id="COG0637">
    <property type="taxonomic scope" value="Bacteria"/>
</dbReference>
<dbReference type="HOGENOM" id="CLU_037265_4_1_11"/>
<dbReference type="UniPathway" id="UPA00299"/>
<dbReference type="Proteomes" id="UP000000765">
    <property type="component" value="Chromosome"/>
</dbReference>
<dbReference type="GO" id="GO:0046872">
    <property type="term" value="F:metal ion binding"/>
    <property type="evidence" value="ECO:0007669"/>
    <property type="project" value="UniProtKB-KW"/>
</dbReference>
<dbReference type="GO" id="GO:0004805">
    <property type="term" value="F:trehalose-phosphatase activity"/>
    <property type="evidence" value="ECO:0007669"/>
    <property type="project" value="UniProtKB-EC"/>
</dbReference>
<dbReference type="GO" id="GO:0005992">
    <property type="term" value="P:trehalose biosynthetic process"/>
    <property type="evidence" value="ECO:0007669"/>
    <property type="project" value="UniProtKB-UniPathway"/>
</dbReference>
<dbReference type="CDD" id="cd01627">
    <property type="entry name" value="HAD_TPP"/>
    <property type="match status" value="1"/>
</dbReference>
<dbReference type="FunFam" id="3.30.70.1020:FF:000007">
    <property type="entry name" value="Trehalose 6-phosphate phosphatase"/>
    <property type="match status" value="1"/>
</dbReference>
<dbReference type="Gene3D" id="3.40.50.1000">
    <property type="entry name" value="HAD superfamily/HAD-like"/>
    <property type="match status" value="2"/>
</dbReference>
<dbReference type="Gene3D" id="3.30.70.1020">
    <property type="entry name" value="Trehalose-6-phosphate phosphatase related protein, domain 2"/>
    <property type="match status" value="1"/>
</dbReference>
<dbReference type="InterPro" id="IPR036412">
    <property type="entry name" value="HAD-like_sf"/>
</dbReference>
<dbReference type="InterPro" id="IPR006379">
    <property type="entry name" value="HAD-SF_hydro_IIB"/>
</dbReference>
<dbReference type="InterPro" id="IPR023214">
    <property type="entry name" value="HAD_sf"/>
</dbReference>
<dbReference type="InterPro" id="IPR044651">
    <property type="entry name" value="OTSB-like"/>
</dbReference>
<dbReference type="InterPro" id="IPR003337">
    <property type="entry name" value="Trehalose_PPase"/>
</dbReference>
<dbReference type="NCBIfam" id="TIGR01484">
    <property type="entry name" value="HAD-SF-IIB"/>
    <property type="match status" value="1"/>
</dbReference>
<dbReference type="NCBIfam" id="TIGR00685">
    <property type="entry name" value="T6PP"/>
    <property type="match status" value="1"/>
</dbReference>
<dbReference type="PANTHER" id="PTHR43768">
    <property type="entry name" value="TREHALOSE 6-PHOSPHATE PHOSPHATASE"/>
    <property type="match status" value="1"/>
</dbReference>
<dbReference type="PANTHER" id="PTHR43768:SF3">
    <property type="entry name" value="TREHALOSE 6-PHOSPHATE PHOSPHATASE"/>
    <property type="match status" value="1"/>
</dbReference>
<dbReference type="Pfam" id="PF02358">
    <property type="entry name" value="Trehalose_PPase"/>
    <property type="match status" value="1"/>
</dbReference>
<dbReference type="SUPFAM" id="SSF56784">
    <property type="entry name" value="HAD-like"/>
    <property type="match status" value="2"/>
</dbReference>